<sequence>MTMLDTTSTVAVSLYALLSTAYKSMQAVYSLPTDVSLASHGLGGFDELPSVDVIVPSFNEDPRTLSECLASIAGQEYGGRLQVYLVDDGSENREALRLVHEAFARDPRFNILLLPQNVGKRKAQDRCDQRSAGDMVLNVDSDTILASDVIRKLVPKNARVAVGRMGQLTGPQPKRQLADPFDDMEYWLACNEERSQQARFGCVMFCSGSCVMYRLVSASLLDQYDAQYFRKQRFGEIDIHLSHAEGSFRTEYRPSAHAATVVPNKLGPYLGQQLRWARSTFRTTLLGAPLPNLNRFLMLDVVGQNLGPLLLDHSVLTGLAQLALTGTAPWLAALMIVAMTIDRCSVVALRARQLRFLGFSLHTFINIFLLLPLKAYALCTLSNIAWLSSLLCWQLESTSTADARTTECSDMRTASKLSPPPSCQANDV</sequence>
<comment type="function">
    <text>Involved in the synthesis of Nod factor, a sulfated N-acyl-beta-1,4-tetrasaccharide of N-acetylglucosamine which initiates a series of events in the host plant species leading eventually to nodulation.</text>
</comment>
<comment type="subcellular location">
    <subcellularLocation>
        <location evidence="1">Cell membrane</location>
        <topology evidence="1">Peripheral membrane protein</topology>
    </subcellularLocation>
</comment>
<comment type="similarity">
    <text evidence="1">Belongs to the NodC/HAS family.</text>
</comment>
<comment type="caution">
    <text evidence="1">Plasmid p42d was originally thought to originate from Rhizobium leguminosarum (biovar phaseoli).</text>
</comment>
<keyword id="KW-1003">Cell membrane</keyword>
<keyword id="KW-0328">Glycosyltransferase</keyword>
<keyword id="KW-0472">Membrane</keyword>
<keyword id="KW-0536">Nodulation</keyword>
<keyword id="KW-0614">Plasmid</keyword>
<keyword id="KW-0808">Transferase</keyword>
<name>NODC_RHILP</name>
<protein>
    <recommendedName>
        <fullName>N-acetylglucosaminyltransferase</fullName>
        <ecNumber>2.4.1.-</ecNumber>
    </recommendedName>
    <alternativeName>
        <fullName>Nodulation protein C</fullName>
    </alternativeName>
</protein>
<dbReference type="EC" id="2.4.1.-"/>
<dbReference type="EMBL" id="M58626">
    <property type="protein sequence ID" value="AAA98211.1"/>
    <property type="molecule type" value="Genomic_DNA"/>
</dbReference>
<dbReference type="PIR" id="E38180">
    <property type="entry name" value="E38180"/>
</dbReference>
<dbReference type="SMR" id="P24151"/>
<dbReference type="CAZy" id="GT2">
    <property type="family name" value="Glycosyltransferase Family 2"/>
</dbReference>
<dbReference type="GO" id="GO:0005886">
    <property type="term" value="C:plasma membrane"/>
    <property type="evidence" value="ECO:0007669"/>
    <property type="project" value="UniProtKB-SubCell"/>
</dbReference>
<dbReference type="GO" id="GO:0050501">
    <property type="term" value="F:hyaluronan synthase activity"/>
    <property type="evidence" value="ECO:0007669"/>
    <property type="project" value="TreeGrafter"/>
</dbReference>
<dbReference type="GO" id="GO:0085029">
    <property type="term" value="P:extracellular matrix assembly"/>
    <property type="evidence" value="ECO:0007669"/>
    <property type="project" value="TreeGrafter"/>
</dbReference>
<dbReference type="GO" id="GO:0030213">
    <property type="term" value="P:hyaluronan biosynthetic process"/>
    <property type="evidence" value="ECO:0007669"/>
    <property type="project" value="TreeGrafter"/>
</dbReference>
<dbReference type="CDD" id="cd06423">
    <property type="entry name" value="CESA_like"/>
    <property type="match status" value="1"/>
</dbReference>
<dbReference type="Gene3D" id="3.90.550.10">
    <property type="entry name" value="Spore Coat Polysaccharide Biosynthesis Protein SpsA, Chain A"/>
    <property type="match status" value="1"/>
</dbReference>
<dbReference type="InterPro" id="IPR001173">
    <property type="entry name" value="Glyco_trans_2-like"/>
</dbReference>
<dbReference type="InterPro" id="IPR029044">
    <property type="entry name" value="Nucleotide-diphossugar_trans"/>
</dbReference>
<dbReference type="PANTHER" id="PTHR22913">
    <property type="entry name" value="HYALURONAN SYNTHASE"/>
    <property type="match status" value="1"/>
</dbReference>
<dbReference type="PANTHER" id="PTHR22913:SF12">
    <property type="entry name" value="MANNURONAN SYNTHASE"/>
    <property type="match status" value="1"/>
</dbReference>
<dbReference type="Pfam" id="PF00535">
    <property type="entry name" value="Glycos_transf_2"/>
    <property type="match status" value="1"/>
</dbReference>
<dbReference type="SUPFAM" id="SSF53448">
    <property type="entry name" value="Nucleotide-diphospho-sugar transferases"/>
    <property type="match status" value="1"/>
</dbReference>
<gene>
    <name type="primary">nodC</name>
</gene>
<feature type="chain" id="PRO_0000197189" description="N-acetylglucosaminyltransferase">
    <location>
        <begin position="1"/>
        <end position="428"/>
    </location>
</feature>
<accession>P24151</accession>
<reference key="1">
    <citation type="journal article" date="1991" name="J. Bacteriol.">
        <title>Novel organization of the common nodulation genes in Rhizobium leguminosarum bv. phaseoli strains.</title>
        <authorList>
            <person name="Vazquez M.V."/>
            <person name="Davalos A."/>
            <person name="Las Penas A."/>
            <person name="Sanchez F."/>
            <person name="Quinto C."/>
        </authorList>
    </citation>
    <scope>NUCLEOTIDE SEQUENCE [GENOMIC DNA]</scope>
    <source>
        <strain>CE-3</strain>
    </source>
</reference>
<evidence type="ECO:0000305" key="1"/>
<organism>
    <name type="scientific">Rhizobium leguminosarum bv. phaseoli</name>
    <dbReference type="NCBI Taxonomy" id="385"/>
    <lineage>
        <taxon>Bacteria</taxon>
        <taxon>Pseudomonadati</taxon>
        <taxon>Pseudomonadota</taxon>
        <taxon>Alphaproteobacteria</taxon>
        <taxon>Hyphomicrobiales</taxon>
        <taxon>Rhizobiaceae</taxon>
        <taxon>Rhizobium/Agrobacterium group</taxon>
        <taxon>Rhizobium</taxon>
    </lineage>
</organism>
<proteinExistence type="inferred from homology"/>
<geneLocation type="plasmid">
    <name>sym p42d</name>
</geneLocation>